<accession>Q9QXJ4</accession>
<accession>Q14C12</accession>
<comment type="similarity">
    <text evidence="2">Belongs to the small GTPase superfamily. Arf family.</text>
</comment>
<keyword id="KW-0342">GTP-binding</keyword>
<keyword id="KW-0547">Nucleotide-binding</keyword>
<keyword id="KW-1185">Reference proteome</keyword>
<feature type="chain" id="PRO_0000207477" description="ADP-ribosylation factor-like protein 10">
    <location>
        <begin position="1"/>
        <end position="243"/>
    </location>
</feature>
<feature type="binding site" evidence="1">
    <location>
        <begin position="83"/>
        <end position="90"/>
    </location>
    <ligand>
        <name>GTP</name>
        <dbReference type="ChEBI" id="CHEBI:37565"/>
    </ligand>
</feature>
<feature type="binding site" evidence="1">
    <location>
        <begin position="127"/>
        <end position="131"/>
    </location>
    <ligand>
        <name>GTP</name>
        <dbReference type="ChEBI" id="CHEBI:37565"/>
    </ligand>
</feature>
<feature type="binding site" evidence="1">
    <location>
        <begin position="184"/>
        <end position="187"/>
    </location>
    <ligand>
        <name>GTP</name>
        <dbReference type="ChEBI" id="CHEBI:37565"/>
    </ligand>
</feature>
<feature type="sequence conflict" description="In Ref. 1; AAF20926." evidence="2" ref="1">
    <original>G</original>
    <variation>D</variation>
    <location>
        <position position="130"/>
    </location>
</feature>
<protein>
    <recommendedName>
        <fullName>ADP-ribosylation factor-like protein 10</fullName>
    </recommendedName>
    <alternativeName>
        <fullName>ADP-ribosylation factor-like membrane-associated protein</fullName>
    </alternativeName>
</protein>
<gene>
    <name type="primary">Arl10</name>
    <name type="synonym">Arl10a</name>
    <name type="synonym">Arm1</name>
</gene>
<dbReference type="EMBL" id="AF205936">
    <property type="protein sequence ID" value="AAF20926.1"/>
    <property type="molecule type" value="mRNA"/>
</dbReference>
<dbReference type="EMBL" id="AC155262">
    <property type="status" value="NOT_ANNOTATED_CDS"/>
    <property type="molecule type" value="Genomic_DNA"/>
</dbReference>
<dbReference type="EMBL" id="CH466546">
    <property type="protein sequence ID" value="EDL41145.1"/>
    <property type="molecule type" value="Genomic_DNA"/>
</dbReference>
<dbReference type="EMBL" id="BC115498">
    <property type="protein sequence ID" value="AAI15499.1"/>
    <property type="molecule type" value="mRNA"/>
</dbReference>
<dbReference type="EMBL" id="BK001711">
    <property type="protein sequence ID" value="DAA02253.1"/>
    <property type="molecule type" value="mRNA"/>
</dbReference>
<dbReference type="CCDS" id="CCDS26530.1"/>
<dbReference type="RefSeq" id="NP_064352.2">
    <property type="nucleotide sequence ID" value="NM_019968.3"/>
</dbReference>
<dbReference type="SMR" id="Q9QXJ4"/>
<dbReference type="BioGRID" id="208179">
    <property type="interactions" value="1"/>
</dbReference>
<dbReference type="FunCoup" id="Q9QXJ4">
    <property type="interactions" value="49"/>
</dbReference>
<dbReference type="STRING" id="10090.ENSMUSP00000026988"/>
<dbReference type="iPTMnet" id="Q9QXJ4"/>
<dbReference type="PhosphoSitePlus" id="Q9QXJ4"/>
<dbReference type="PaxDb" id="10090-ENSMUSP00000026988"/>
<dbReference type="ProteomicsDB" id="283171"/>
<dbReference type="Antibodypedia" id="29070">
    <property type="antibodies" value="78 antibodies from 15 providers"/>
</dbReference>
<dbReference type="Ensembl" id="ENSMUST00000026988.11">
    <property type="protein sequence ID" value="ENSMUSP00000026988.5"/>
    <property type="gene ID" value="ENSMUSG00000025870.11"/>
</dbReference>
<dbReference type="GeneID" id="56795"/>
<dbReference type="KEGG" id="mmu:56795"/>
<dbReference type="UCSC" id="uc007qoj.2">
    <property type="organism name" value="mouse"/>
</dbReference>
<dbReference type="AGR" id="MGI:1930788"/>
<dbReference type="CTD" id="285598"/>
<dbReference type="MGI" id="MGI:1930788">
    <property type="gene designation" value="Arl10"/>
</dbReference>
<dbReference type="VEuPathDB" id="HostDB:ENSMUSG00000025870"/>
<dbReference type="eggNOG" id="KOG0075">
    <property type="taxonomic scope" value="Eukaryota"/>
</dbReference>
<dbReference type="GeneTree" id="ENSGT00940000160017"/>
<dbReference type="HOGENOM" id="CLU_040729_11_0_1"/>
<dbReference type="InParanoid" id="Q9QXJ4"/>
<dbReference type="OMA" id="FYKRRVW"/>
<dbReference type="OrthoDB" id="413813at2759"/>
<dbReference type="PhylomeDB" id="Q9QXJ4"/>
<dbReference type="TreeFam" id="TF105469"/>
<dbReference type="BioGRID-ORCS" id="56795">
    <property type="hits" value="2 hits in 76 CRISPR screens"/>
</dbReference>
<dbReference type="ChiTaRS" id="Adrm1">
    <property type="organism name" value="mouse"/>
</dbReference>
<dbReference type="PRO" id="PR:Q9QXJ4"/>
<dbReference type="Proteomes" id="UP000000589">
    <property type="component" value="Chromosome 13"/>
</dbReference>
<dbReference type="RNAct" id="Q9QXJ4">
    <property type="molecule type" value="protein"/>
</dbReference>
<dbReference type="Bgee" id="ENSMUSG00000025870">
    <property type="expression patterns" value="Expressed in embryonic brain and 85 other cell types or tissues"/>
</dbReference>
<dbReference type="ExpressionAtlas" id="Q9QXJ4">
    <property type="expression patterns" value="baseline and differential"/>
</dbReference>
<dbReference type="GO" id="GO:0005525">
    <property type="term" value="F:GTP binding"/>
    <property type="evidence" value="ECO:0007669"/>
    <property type="project" value="UniProtKB-KW"/>
</dbReference>
<dbReference type="GO" id="GO:0003924">
    <property type="term" value="F:GTPase activity"/>
    <property type="evidence" value="ECO:0007669"/>
    <property type="project" value="InterPro"/>
</dbReference>
<dbReference type="Gene3D" id="3.40.50.300">
    <property type="entry name" value="P-loop containing nucleotide triphosphate hydrolases"/>
    <property type="match status" value="1"/>
</dbReference>
<dbReference type="InterPro" id="IPR042951">
    <property type="entry name" value="ARL10"/>
</dbReference>
<dbReference type="InterPro" id="IPR027417">
    <property type="entry name" value="P-loop_NTPase"/>
</dbReference>
<dbReference type="InterPro" id="IPR006689">
    <property type="entry name" value="Small_GTPase_ARF/SAR"/>
</dbReference>
<dbReference type="PANTHER" id="PTHR47575">
    <property type="entry name" value="ADP-RIBOSYLATION FACTOR-LIKE PROTEIN 10"/>
    <property type="match status" value="1"/>
</dbReference>
<dbReference type="PANTHER" id="PTHR47575:SF1">
    <property type="entry name" value="ADP-RIBOSYLATION FACTOR-LIKE PROTEIN 10"/>
    <property type="match status" value="1"/>
</dbReference>
<dbReference type="Pfam" id="PF00025">
    <property type="entry name" value="Arf"/>
    <property type="match status" value="1"/>
</dbReference>
<dbReference type="PRINTS" id="PR00328">
    <property type="entry name" value="SAR1GTPBP"/>
</dbReference>
<dbReference type="SMART" id="SM00177">
    <property type="entry name" value="ARF"/>
    <property type="match status" value="1"/>
</dbReference>
<dbReference type="SMART" id="SM00178">
    <property type="entry name" value="SAR"/>
    <property type="match status" value="1"/>
</dbReference>
<dbReference type="SUPFAM" id="SSF52540">
    <property type="entry name" value="P-loop containing nucleoside triphosphate hydrolases"/>
    <property type="match status" value="1"/>
</dbReference>
<dbReference type="PROSITE" id="PS51417">
    <property type="entry name" value="ARF"/>
    <property type="match status" value="1"/>
</dbReference>
<reference key="1">
    <citation type="submission" date="1999-11" db="EMBL/GenBank/DDBJ databases">
        <title>ARM, a novel ADP-ribosylation factor-like membrane associated protein, interacts with the chloride channel ClC3.</title>
        <authorList>
            <person name="Nehrke K."/>
            <person name="Silverman P."/>
            <person name="Pilato J."/>
            <person name="Kingsley P."/>
            <person name="Melvin J.E."/>
        </authorList>
    </citation>
    <scope>NUCLEOTIDE SEQUENCE [MRNA]</scope>
    <source>
        <strain>C57BL/6J</strain>
    </source>
</reference>
<reference key="2">
    <citation type="journal article" date="2009" name="PLoS Biol.">
        <title>Lineage-specific biology revealed by a finished genome assembly of the mouse.</title>
        <authorList>
            <person name="Church D.M."/>
            <person name="Goodstadt L."/>
            <person name="Hillier L.W."/>
            <person name="Zody M.C."/>
            <person name="Goldstein S."/>
            <person name="She X."/>
            <person name="Bult C.J."/>
            <person name="Agarwala R."/>
            <person name="Cherry J.L."/>
            <person name="DiCuccio M."/>
            <person name="Hlavina W."/>
            <person name="Kapustin Y."/>
            <person name="Meric P."/>
            <person name="Maglott D."/>
            <person name="Birtle Z."/>
            <person name="Marques A.C."/>
            <person name="Graves T."/>
            <person name="Zhou S."/>
            <person name="Teague B."/>
            <person name="Potamousis K."/>
            <person name="Churas C."/>
            <person name="Place M."/>
            <person name="Herschleb J."/>
            <person name="Runnheim R."/>
            <person name="Forrest D."/>
            <person name="Amos-Landgraf J."/>
            <person name="Schwartz D.C."/>
            <person name="Cheng Z."/>
            <person name="Lindblad-Toh K."/>
            <person name="Eichler E.E."/>
            <person name="Ponting C.P."/>
        </authorList>
    </citation>
    <scope>NUCLEOTIDE SEQUENCE [LARGE SCALE GENOMIC DNA]</scope>
    <source>
        <strain>C57BL/6J</strain>
    </source>
</reference>
<reference key="3">
    <citation type="submission" date="2005-07" db="EMBL/GenBank/DDBJ databases">
        <authorList>
            <person name="Mural R.J."/>
            <person name="Adams M.D."/>
            <person name="Myers E.W."/>
            <person name="Smith H.O."/>
            <person name="Venter J.C."/>
        </authorList>
    </citation>
    <scope>NUCLEOTIDE SEQUENCE [LARGE SCALE GENOMIC DNA]</scope>
</reference>
<reference key="4">
    <citation type="journal article" date="2004" name="Genome Res.">
        <title>The status, quality, and expansion of the NIH full-length cDNA project: the Mammalian Gene Collection (MGC).</title>
        <authorList>
            <consortium name="The MGC Project Team"/>
        </authorList>
    </citation>
    <scope>NUCLEOTIDE SEQUENCE [LARGE SCALE MRNA]</scope>
</reference>
<reference key="5">
    <citation type="journal article" date="2004" name="Biochem. Biophys. Res. Commun.">
        <title>Rasl11a, member of a novel small monomeric GTPase gene family, is differentially expressed in prostate tumors.</title>
        <authorList>
            <person name="Louro R."/>
            <person name="Nakaya H.I."/>
            <person name="Paquola A.C.M."/>
            <person name="Martins E.A.L."/>
            <person name="da Silva A.M."/>
            <person name="Verjovski-Almeida S."/>
            <person name="Reis E.M."/>
        </authorList>
    </citation>
    <scope>IDENTIFICATION</scope>
</reference>
<reference key="6">
    <citation type="journal article" date="2010" name="Cell">
        <title>A tissue-specific atlas of mouse protein phosphorylation and expression.</title>
        <authorList>
            <person name="Huttlin E.L."/>
            <person name="Jedrychowski M.P."/>
            <person name="Elias J.E."/>
            <person name="Goswami T."/>
            <person name="Rad R."/>
            <person name="Beausoleil S.A."/>
            <person name="Villen J."/>
            <person name="Haas W."/>
            <person name="Sowa M.E."/>
            <person name="Gygi S.P."/>
        </authorList>
    </citation>
    <scope>IDENTIFICATION BY MASS SPECTROMETRY [LARGE SCALE ANALYSIS]</scope>
    <source>
        <tissue>Kidney</tissue>
    </source>
</reference>
<organism>
    <name type="scientific">Mus musculus</name>
    <name type="common">Mouse</name>
    <dbReference type="NCBI Taxonomy" id="10090"/>
    <lineage>
        <taxon>Eukaryota</taxon>
        <taxon>Metazoa</taxon>
        <taxon>Chordata</taxon>
        <taxon>Craniata</taxon>
        <taxon>Vertebrata</taxon>
        <taxon>Euteleostomi</taxon>
        <taxon>Mammalia</taxon>
        <taxon>Eutheria</taxon>
        <taxon>Euarchontoglires</taxon>
        <taxon>Glires</taxon>
        <taxon>Rodentia</taxon>
        <taxon>Myomorpha</taxon>
        <taxon>Muroidea</taxon>
        <taxon>Muridae</taxon>
        <taxon>Murinae</taxon>
        <taxon>Mus</taxon>
        <taxon>Mus</taxon>
    </lineage>
</organism>
<proteinExistence type="evidence at protein level"/>
<sequence length="243" mass="27303">MAPRPLGPLVLALGGAAAVLGSVLFILWKAYFGRGRERRWDRGEAWWGADTARLPQWDEWEPEDEEDEPALEELEQREVLVLGLDGSGKSTFLRMLAGKPPVEGHVPTWGFNSVRLPTKNFEVDLLEIGGSQNLRFYWKEFVNEVDVLVFMVDSTDRLRLPWARQELQKLLDRDPDLPVVIVANKQDLSGAMNMVELQQELGLLASYNQREVFLLAASIAPAGSGFGEPGTVHIWKLLLQLLS</sequence>
<name>ARL10_MOUSE</name>
<evidence type="ECO:0000250" key="1"/>
<evidence type="ECO:0000305" key="2"/>